<evidence type="ECO:0000255" key="1">
    <source>
        <dbReference type="HAMAP-Rule" id="MF_01632"/>
    </source>
</evidence>
<sequence length="174" mass="19916">MFIGDASILKPIQWCATEHPELPADIADWLMELGSMTRRFEQHCQRVHVEPQRECFITRDALGEEAEHLPVSQRYWLREIVLFGDNVPWLLGRTVIPEETLSGPDRALVDLGTLPLGRYLFSGDALTRDYIHVGRQDNLWARRSLLRLSGNPLLLTEVFLPASPLYTHCDSIPK</sequence>
<gene>
    <name evidence="1" type="primary">ubiC</name>
    <name type="ordered locus">YpAngola_A0678</name>
</gene>
<reference key="1">
    <citation type="journal article" date="2010" name="J. Bacteriol.">
        <title>Genome sequence of the deep-rooted Yersinia pestis strain Angola reveals new insights into the evolution and pangenome of the plague bacterium.</title>
        <authorList>
            <person name="Eppinger M."/>
            <person name="Worsham P.L."/>
            <person name="Nikolich M.P."/>
            <person name="Riley D.R."/>
            <person name="Sebastian Y."/>
            <person name="Mou S."/>
            <person name="Achtman M."/>
            <person name="Lindler L.E."/>
            <person name="Ravel J."/>
        </authorList>
    </citation>
    <scope>NUCLEOTIDE SEQUENCE [LARGE SCALE GENOMIC DNA]</scope>
    <source>
        <strain>Angola</strain>
    </source>
</reference>
<organism>
    <name type="scientific">Yersinia pestis bv. Antiqua (strain Angola)</name>
    <dbReference type="NCBI Taxonomy" id="349746"/>
    <lineage>
        <taxon>Bacteria</taxon>
        <taxon>Pseudomonadati</taxon>
        <taxon>Pseudomonadota</taxon>
        <taxon>Gammaproteobacteria</taxon>
        <taxon>Enterobacterales</taxon>
        <taxon>Yersiniaceae</taxon>
        <taxon>Yersinia</taxon>
    </lineage>
</organism>
<keyword id="KW-0963">Cytoplasm</keyword>
<keyword id="KW-0456">Lyase</keyword>
<keyword id="KW-0670">Pyruvate</keyword>
<keyword id="KW-0831">Ubiquinone biosynthesis</keyword>
<name>UBIC_YERPG</name>
<proteinExistence type="inferred from homology"/>
<feature type="chain" id="PRO_1000186542" description="Chorismate pyruvate-lyase">
    <location>
        <begin position="1"/>
        <end position="174"/>
    </location>
</feature>
<feature type="binding site" evidence="1">
    <location>
        <position position="36"/>
    </location>
    <ligand>
        <name>substrate</name>
    </ligand>
</feature>
<feature type="binding site" evidence="1">
    <location>
        <position position="78"/>
    </location>
    <ligand>
        <name>substrate</name>
    </ligand>
</feature>
<feature type="binding site" evidence="1">
    <location>
        <position position="116"/>
    </location>
    <ligand>
        <name>substrate</name>
    </ligand>
</feature>
<feature type="binding site" evidence="1">
    <location>
        <position position="157"/>
    </location>
    <ligand>
        <name>substrate</name>
    </ligand>
</feature>
<accession>A9QYL0</accession>
<comment type="function">
    <text evidence="1">Removes the pyruvyl group from chorismate, with concomitant aromatization of the ring, to provide 4-hydroxybenzoate (4HB) for the ubiquinone pathway.</text>
</comment>
<comment type="catalytic activity">
    <reaction evidence="1">
        <text>chorismate = 4-hydroxybenzoate + pyruvate</text>
        <dbReference type="Rhea" id="RHEA:16505"/>
        <dbReference type="ChEBI" id="CHEBI:15361"/>
        <dbReference type="ChEBI" id="CHEBI:17879"/>
        <dbReference type="ChEBI" id="CHEBI:29748"/>
        <dbReference type="EC" id="4.1.3.40"/>
    </reaction>
</comment>
<comment type="pathway">
    <text evidence="1">Cofactor biosynthesis; ubiquinone biosynthesis.</text>
</comment>
<comment type="subunit">
    <text evidence="1">Monomer.</text>
</comment>
<comment type="subcellular location">
    <subcellularLocation>
        <location evidence="1">Cytoplasm</location>
    </subcellularLocation>
</comment>
<comment type="similarity">
    <text evidence="1">Belongs to the UbiC family.</text>
</comment>
<dbReference type="EC" id="4.1.3.40" evidence="1"/>
<dbReference type="EMBL" id="CP000901">
    <property type="protein sequence ID" value="ABX86341.1"/>
    <property type="molecule type" value="Genomic_DNA"/>
</dbReference>
<dbReference type="RefSeq" id="WP_002209087.1">
    <property type="nucleotide sequence ID" value="NZ_CP009935.1"/>
</dbReference>
<dbReference type="SMR" id="A9QYL0"/>
<dbReference type="GeneID" id="57974294"/>
<dbReference type="KEGG" id="ypg:YpAngola_A0678"/>
<dbReference type="PATRIC" id="fig|349746.12.peg.1625"/>
<dbReference type="UniPathway" id="UPA00232"/>
<dbReference type="GO" id="GO:0005829">
    <property type="term" value="C:cytosol"/>
    <property type="evidence" value="ECO:0007669"/>
    <property type="project" value="TreeGrafter"/>
</dbReference>
<dbReference type="GO" id="GO:0008813">
    <property type="term" value="F:chorismate lyase activity"/>
    <property type="evidence" value="ECO:0007669"/>
    <property type="project" value="UniProtKB-UniRule"/>
</dbReference>
<dbReference type="GO" id="GO:0042866">
    <property type="term" value="P:pyruvate biosynthetic process"/>
    <property type="evidence" value="ECO:0007669"/>
    <property type="project" value="UniProtKB-UniRule"/>
</dbReference>
<dbReference type="GO" id="GO:0006744">
    <property type="term" value="P:ubiquinone biosynthetic process"/>
    <property type="evidence" value="ECO:0007669"/>
    <property type="project" value="UniProtKB-UniRule"/>
</dbReference>
<dbReference type="Gene3D" id="3.40.1410.10">
    <property type="entry name" value="Chorismate lyase-like"/>
    <property type="match status" value="1"/>
</dbReference>
<dbReference type="HAMAP" id="MF_01632">
    <property type="entry name" value="UbiC"/>
    <property type="match status" value="1"/>
</dbReference>
<dbReference type="InterPro" id="IPR007440">
    <property type="entry name" value="Chorismate--pyruvate_lyase"/>
</dbReference>
<dbReference type="InterPro" id="IPR028978">
    <property type="entry name" value="Chorismate_lyase_/UTRA_dom_sf"/>
</dbReference>
<dbReference type="NCBIfam" id="NF008656">
    <property type="entry name" value="PRK11655.1"/>
    <property type="match status" value="1"/>
</dbReference>
<dbReference type="PANTHER" id="PTHR38683">
    <property type="entry name" value="CHORISMATE PYRUVATE-LYASE"/>
    <property type="match status" value="1"/>
</dbReference>
<dbReference type="PANTHER" id="PTHR38683:SF1">
    <property type="entry name" value="CHORISMATE PYRUVATE-LYASE"/>
    <property type="match status" value="1"/>
</dbReference>
<dbReference type="Pfam" id="PF04345">
    <property type="entry name" value="Chor_lyase"/>
    <property type="match status" value="1"/>
</dbReference>
<dbReference type="SUPFAM" id="SSF64288">
    <property type="entry name" value="Chorismate lyase-like"/>
    <property type="match status" value="1"/>
</dbReference>
<protein>
    <recommendedName>
        <fullName evidence="1">Chorismate pyruvate-lyase</fullName>
        <shortName evidence="1">CL</shortName>
        <shortName evidence="1">CPL</shortName>
        <ecNumber evidence="1">4.1.3.40</ecNumber>
    </recommendedName>
</protein>